<gene>
    <name evidence="1" type="primary">thiM</name>
    <name type="ordered locus">SEN2143</name>
</gene>
<organism>
    <name type="scientific">Salmonella enteritidis PT4 (strain P125109)</name>
    <dbReference type="NCBI Taxonomy" id="550537"/>
    <lineage>
        <taxon>Bacteria</taxon>
        <taxon>Pseudomonadati</taxon>
        <taxon>Pseudomonadota</taxon>
        <taxon>Gammaproteobacteria</taxon>
        <taxon>Enterobacterales</taxon>
        <taxon>Enterobacteriaceae</taxon>
        <taxon>Salmonella</taxon>
    </lineage>
</organism>
<sequence length="265" mass="27422">MQPDLHCRTLAAHTLKHFRALSPLTHCMTNDVVQTFTANTLLALGASPAMVIDPVEARPFAAIANALLINVGTLTASRADAMRAAVESAYDAKTPWTLDPVAVGALEFRRRFCLDLLSLRPAAIRGNASEILALSGMALGGRGVDTTEAALAALPAAQALARQIDCIVVVTGEIDYVTNGQRTLSIPGGDPLMTRIVGTGCALSAVVAASCALPGAALDNVASACCWMKLAGQAAAERSEGPGSFIPAFLDALYHLDVEAANATN</sequence>
<accession>B5R0D9</accession>
<keyword id="KW-0067">ATP-binding</keyword>
<keyword id="KW-0418">Kinase</keyword>
<keyword id="KW-0460">Magnesium</keyword>
<keyword id="KW-0479">Metal-binding</keyword>
<keyword id="KW-0547">Nucleotide-binding</keyword>
<keyword id="KW-0784">Thiamine biosynthesis</keyword>
<keyword id="KW-0808">Transferase</keyword>
<proteinExistence type="inferred from homology"/>
<name>THIM_SALEP</name>
<comment type="function">
    <text evidence="1">Catalyzes the phosphorylation of the hydroxyl group of 4-methyl-5-beta-hydroxyethylthiazole (THZ).</text>
</comment>
<comment type="catalytic activity">
    <reaction evidence="1">
        <text>5-(2-hydroxyethyl)-4-methylthiazole + ATP = 4-methyl-5-(2-phosphooxyethyl)-thiazole + ADP + H(+)</text>
        <dbReference type="Rhea" id="RHEA:24212"/>
        <dbReference type="ChEBI" id="CHEBI:15378"/>
        <dbReference type="ChEBI" id="CHEBI:17957"/>
        <dbReference type="ChEBI" id="CHEBI:30616"/>
        <dbReference type="ChEBI" id="CHEBI:58296"/>
        <dbReference type="ChEBI" id="CHEBI:456216"/>
        <dbReference type="EC" id="2.7.1.50"/>
    </reaction>
</comment>
<comment type="cofactor">
    <cofactor evidence="1">
        <name>Mg(2+)</name>
        <dbReference type="ChEBI" id="CHEBI:18420"/>
    </cofactor>
</comment>
<comment type="pathway">
    <text evidence="1">Cofactor biosynthesis; thiamine diphosphate biosynthesis; 4-methyl-5-(2-phosphoethyl)-thiazole from 5-(2-hydroxyethyl)-4-methylthiazole: step 1/1.</text>
</comment>
<comment type="similarity">
    <text evidence="1">Belongs to the Thz kinase family.</text>
</comment>
<protein>
    <recommendedName>
        <fullName evidence="1">Hydroxyethylthiazole kinase</fullName>
        <ecNumber evidence="1">2.7.1.50</ecNumber>
    </recommendedName>
    <alternativeName>
        <fullName evidence="1">4-methyl-5-beta-hydroxyethylthiazole kinase</fullName>
        <shortName evidence="1">TH kinase</shortName>
        <shortName evidence="1">Thz kinase</shortName>
    </alternativeName>
</protein>
<dbReference type="EC" id="2.7.1.50" evidence="1"/>
<dbReference type="EMBL" id="AM933172">
    <property type="protein sequence ID" value="CAR33725.1"/>
    <property type="molecule type" value="Genomic_DNA"/>
</dbReference>
<dbReference type="RefSeq" id="WP_001182156.1">
    <property type="nucleotide sequence ID" value="NC_011294.1"/>
</dbReference>
<dbReference type="SMR" id="B5R0D9"/>
<dbReference type="KEGG" id="set:SEN2143"/>
<dbReference type="HOGENOM" id="CLU_019943_0_1_6"/>
<dbReference type="UniPathway" id="UPA00060">
    <property type="reaction ID" value="UER00139"/>
</dbReference>
<dbReference type="Proteomes" id="UP000000613">
    <property type="component" value="Chromosome"/>
</dbReference>
<dbReference type="GO" id="GO:0005524">
    <property type="term" value="F:ATP binding"/>
    <property type="evidence" value="ECO:0007669"/>
    <property type="project" value="UniProtKB-UniRule"/>
</dbReference>
<dbReference type="GO" id="GO:0004417">
    <property type="term" value="F:hydroxyethylthiazole kinase activity"/>
    <property type="evidence" value="ECO:0007669"/>
    <property type="project" value="UniProtKB-UniRule"/>
</dbReference>
<dbReference type="GO" id="GO:0000287">
    <property type="term" value="F:magnesium ion binding"/>
    <property type="evidence" value="ECO:0007669"/>
    <property type="project" value="UniProtKB-UniRule"/>
</dbReference>
<dbReference type="GO" id="GO:0009228">
    <property type="term" value="P:thiamine biosynthetic process"/>
    <property type="evidence" value="ECO:0007669"/>
    <property type="project" value="UniProtKB-KW"/>
</dbReference>
<dbReference type="GO" id="GO:0009229">
    <property type="term" value="P:thiamine diphosphate biosynthetic process"/>
    <property type="evidence" value="ECO:0007669"/>
    <property type="project" value="UniProtKB-UniRule"/>
</dbReference>
<dbReference type="CDD" id="cd01170">
    <property type="entry name" value="THZ_kinase"/>
    <property type="match status" value="1"/>
</dbReference>
<dbReference type="FunFam" id="3.40.1190.20:FF:000015">
    <property type="entry name" value="Hydroxyethylthiazole kinase"/>
    <property type="match status" value="1"/>
</dbReference>
<dbReference type="Gene3D" id="3.40.1190.20">
    <property type="match status" value="1"/>
</dbReference>
<dbReference type="HAMAP" id="MF_00228">
    <property type="entry name" value="Thz_kinase"/>
    <property type="match status" value="1"/>
</dbReference>
<dbReference type="InterPro" id="IPR000417">
    <property type="entry name" value="Hyethyz_kinase"/>
</dbReference>
<dbReference type="InterPro" id="IPR029056">
    <property type="entry name" value="Ribokinase-like"/>
</dbReference>
<dbReference type="NCBIfam" id="NF006830">
    <property type="entry name" value="PRK09355.1"/>
    <property type="match status" value="1"/>
</dbReference>
<dbReference type="NCBIfam" id="TIGR00694">
    <property type="entry name" value="thiM"/>
    <property type="match status" value="1"/>
</dbReference>
<dbReference type="Pfam" id="PF02110">
    <property type="entry name" value="HK"/>
    <property type="match status" value="1"/>
</dbReference>
<dbReference type="PIRSF" id="PIRSF000513">
    <property type="entry name" value="Thz_kinase"/>
    <property type="match status" value="1"/>
</dbReference>
<dbReference type="PRINTS" id="PR01099">
    <property type="entry name" value="HYETHTZKNASE"/>
</dbReference>
<dbReference type="SUPFAM" id="SSF53613">
    <property type="entry name" value="Ribokinase-like"/>
    <property type="match status" value="1"/>
</dbReference>
<evidence type="ECO:0000255" key="1">
    <source>
        <dbReference type="HAMAP-Rule" id="MF_00228"/>
    </source>
</evidence>
<feature type="chain" id="PRO_1000100420" description="Hydroxyethylthiazole kinase">
    <location>
        <begin position="1"/>
        <end position="265"/>
    </location>
</feature>
<feature type="binding site" evidence="1">
    <location>
        <position position="50"/>
    </location>
    <ligand>
        <name>substrate</name>
    </ligand>
</feature>
<feature type="binding site" evidence="1">
    <location>
        <position position="125"/>
    </location>
    <ligand>
        <name>ATP</name>
        <dbReference type="ChEBI" id="CHEBI:30616"/>
    </ligand>
</feature>
<feature type="binding site" evidence="1">
    <location>
        <position position="171"/>
    </location>
    <ligand>
        <name>ATP</name>
        <dbReference type="ChEBI" id="CHEBI:30616"/>
    </ligand>
</feature>
<feature type="binding site" evidence="1">
    <location>
        <position position="198"/>
    </location>
    <ligand>
        <name>substrate</name>
    </ligand>
</feature>
<reference key="1">
    <citation type="journal article" date="2008" name="Genome Res.">
        <title>Comparative genome analysis of Salmonella enteritidis PT4 and Salmonella gallinarum 287/91 provides insights into evolutionary and host adaptation pathways.</title>
        <authorList>
            <person name="Thomson N.R."/>
            <person name="Clayton D.J."/>
            <person name="Windhorst D."/>
            <person name="Vernikos G."/>
            <person name="Davidson S."/>
            <person name="Churcher C."/>
            <person name="Quail M.A."/>
            <person name="Stevens M."/>
            <person name="Jones M.A."/>
            <person name="Watson M."/>
            <person name="Barron A."/>
            <person name="Layton A."/>
            <person name="Pickard D."/>
            <person name="Kingsley R.A."/>
            <person name="Bignell A."/>
            <person name="Clark L."/>
            <person name="Harris B."/>
            <person name="Ormond D."/>
            <person name="Abdellah Z."/>
            <person name="Brooks K."/>
            <person name="Cherevach I."/>
            <person name="Chillingworth T."/>
            <person name="Woodward J."/>
            <person name="Norberczak H."/>
            <person name="Lord A."/>
            <person name="Arrowsmith C."/>
            <person name="Jagels K."/>
            <person name="Moule S."/>
            <person name="Mungall K."/>
            <person name="Saunders M."/>
            <person name="Whitehead S."/>
            <person name="Chabalgoity J.A."/>
            <person name="Maskell D."/>
            <person name="Humphreys T."/>
            <person name="Roberts M."/>
            <person name="Barrow P.A."/>
            <person name="Dougan G."/>
            <person name="Parkhill J."/>
        </authorList>
    </citation>
    <scope>NUCLEOTIDE SEQUENCE [LARGE SCALE GENOMIC DNA]</scope>
    <source>
        <strain>P125109</strain>
    </source>
</reference>